<protein>
    <recommendedName>
        <fullName>Autophagy-related protein 18</fullName>
    </recommendedName>
</protein>
<name>ATG18_PICST</name>
<dbReference type="EMBL" id="AAVQ01000001">
    <property type="protein sequence ID" value="EAZ63740.2"/>
    <property type="molecule type" value="Genomic_DNA"/>
</dbReference>
<dbReference type="RefSeq" id="XP_001387763.2">
    <property type="nucleotide sequence ID" value="XM_001387726.1"/>
</dbReference>
<dbReference type="SMR" id="A3GFE3"/>
<dbReference type="FunCoup" id="A3GFE3">
    <property type="interactions" value="571"/>
</dbReference>
<dbReference type="STRING" id="322104.A3GFE3"/>
<dbReference type="GeneID" id="4850992"/>
<dbReference type="KEGG" id="pic:PICST_52962"/>
<dbReference type="eggNOG" id="KOG2110">
    <property type="taxonomic scope" value="Eukaryota"/>
</dbReference>
<dbReference type="HOGENOM" id="CLU_025895_5_2_1"/>
<dbReference type="InParanoid" id="A3GFE3"/>
<dbReference type="OMA" id="NIAILEM"/>
<dbReference type="OrthoDB" id="1667587at2759"/>
<dbReference type="Proteomes" id="UP000002258">
    <property type="component" value="Chromosome 1"/>
</dbReference>
<dbReference type="GO" id="GO:0005829">
    <property type="term" value="C:cytosol"/>
    <property type="evidence" value="ECO:0007669"/>
    <property type="project" value="EnsemblFungi"/>
</dbReference>
<dbReference type="GO" id="GO:0010008">
    <property type="term" value="C:endosome membrane"/>
    <property type="evidence" value="ECO:0007669"/>
    <property type="project" value="UniProtKB-SubCell"/>
</dbReference>
<dbReference type="GO" id="GO:0000329">
    <property type="term" value="C:fungal-type vacuole membrane"/>
    <property type="evidence" value="ECO:0007669"/>
    <property type="project" value="EnsemblFungi"/>
</dbReference>
<dbReference type="GO" id="GO:0070772">
    <property type="term" value="C:PAS complex"/>
    <property type="evidence" value="ECO:0007669"/>
    <property type="project" value="EnsemblFungi"/>
</dbReference>
<dbReference type="GO" id="GO:0061908">
    <property type="term" value="C:phagophore"/>
    <property type="evidence" value="ECO:0007669"/>
    <property type="project" value="EnsemblFungi"/>
</dbReference>
<dbReference type="GO" id="GO:0034045">
    <property type="term" value="C:phagophore assembly site membrane"/>
    <property type="evidence" value="ECO:0007669"/>
    <property type="project" value="UniProtKB-SubCell"/>
</dbReference>
<dbReference type="GO" id="GO:0080025">
    <property type="term" value="F:phosphatidylinositol-3,5-bisphosphate binding"/>
    <property type="evidence" value="ECO:0007669"/>
    <property type="project" value="EnsemblFungi"/>
</dbReference>
<dbReference type="GO" id="GO:0032266">
    <property type="term" value="F:phosphatidylinositol-3-phosphate binding"/>
    <property type="evidence" value="ECO:0007669"/>
    <property type="project" value="EnsemblFungi"/>
</dbReference>
<dbReference type="GO" id="GO:0070273">
    <property type="term" value="F:phosphatidylinositol-4-phosphate binding"/>
    <property type="evidence" value="ECO:0007669"/>
    <property type="project" value="EnsemblFungi"/>
</dbReference>
<dbReference type="GO" id="GO:0043130">
    <property type="term" value="F:ubiquitin binding"/>
    <property type="evidence" value="ECO:0007669"/>
    <property type="project" value="EnsemblFungi"/>
</dbReference>
<dbReference type="GO" id="GO:0032258">
    <property type="term" value="P:cytoplasm to vacuole targeting by the Cvt pathway"/>
    <property type="evidence" value="ECO:0007669"/>
    <property type="project" value="EnsemblFungi"/>
</dbReference>
<dbReference type="GO" id="GO:0045324">
    <property type="term" value="P:late endosome to vacuole transport"/>
    <property type="evidence" value="ECO:0007669"/>
    <property type="project" value="EnsemblFungi"/>
</dbReference>
<dbReference type="GO" id="GO:0000425">
    <property type="term" value="P:pexophagy"/>
    <property type="evidence" value="ECO:0007669"/>
    <property type="project" value="EnsemblFungi"/>
</dbReference>
<dbReference type="GO" id="GO:0034727">
    <property type="term" value="P:piecemeal microautophagy of the nucleus"/>
    <property type="evidence" value="ECO:0007669"/>
    <property type="project" value="EnsemblFungi"/>
</dbReference>
<dbReference type="GO" id="GO:0044090">
    <property type="term" value="P:positive regulation of vacuole organization"/>
    <property type="evidence" value="ECO:0007669"/>
    <property type="project" value="EnsemblFungi"/>
</dbReference>
<dbReference type="GO" id="GO:0006624">
    <property type="term" value="P:vacuolar protein processing"/>
    <property type="evidence" value="ECO:0007669"/>
    <property type="project" value="EnsemblFungi"/>
</dbReference>
<dbReference type="FunFam" id="2.130.10.10:FF:001928">
    <property type="entry name" value="Autophagy-related protein 18"/>
    <property type="match status" value="1"/>
</dbReference>
<dbReference type="Gene3D" id="2.130.10.10">
    <property type="entry name" value="YVTN repeat-like/Quinoprotein amine dehydrogenase"/>
    <property type="match status" value="1"/>
</dbReference>
<dbReference type="InterPro" id="IPR048720">
    <property type="entry name" value="PROPPIN"/>
</dbReference>
<dbReference type="InterPro" id="IPR015943">
    <property type="entry name" value="WD40/YVTN_repeat-like_dom_sf"/>
</dbReference>
<dbReference type="InterPro" id="IPR036322">
    <property type="entry name" value="WD40_repeat_dom_sf"/>
</dbReference>
<dbReference type="InterPro" id="IPR001680">
    <property type="entry name" value="WD40_rpt"/>
</dbReference>
<dbReference type="PANTHER" id="PTHR11227">
    <property type="entry name" value="WD-REPEAT PROTEIN INTERACTING WITH PHOSPHOINOSIDES WIPI -RELATED"/>
    <property type="match status" value="1"/>
</dbReference>
<dbReference type="Pfam" id="PF21032">
    <property type="entry name" value="PROPPIN"/>
    <property type="match status" value="2"/>
</dbReference>
<dbReference type="SMART" id="SM00320">
    <property type="entry name" value="WD40"/>
    <property type="match status" value="3"/>
</dbReference>
<dbReference type="SUPFAM" id="SSF50978">
    <property type="entry name" value="WD40 repeat-like"/>
    <property type="match status" value="1"/>
</dbReference>
<dbReference type="PROSITE" id="PS50294">
    <property type="entry name" value="WD_REPEATS_REGION"/>
    <property type="match status" value="1"/>
</dbReference>
<organism>
    <name type="scientific">Scheffersomyces stipitis (strain ATCC 58785 / CBS 6054 / NBRC 10063 / NRRL Y-11545)</name>
    <name type="common">Yeast</name>
    <name type="synonym">Pichia stipitis</name>
    <dbReference type="NCBI Taxonomy" id="322104"/>
    <lineage>
        <taxon>Eukaryota</taxon>
        <taxon>Fungi</taxon>
        <taxon>Dikarya</taxon>
        <taxon>Ascomycota</taxon>
        <taxon>Saccharomycotina</taxon>
        <taxon>Pichiomycetes</taxon>
        <taxon>Debaryomycetaceae</taxon>
        <taxon>Scheffersomyces</taxon>
    </lineage>
</organism>
<gene>
    <name type="primary">ATG18</name>
    <name type="ORF">PICST_52962</name>
</gene>
<proteinExistence type="inferred from homology"/>
<reference key="1">
    <citation type="journal article" date="2007" name="Nat. Biotechnol.">
        <title>Genome sequence of the lignocellulose-bioconverting and xylose-fermenting yeast Pichia stipitis.</title>
        <authorList>
            <person name="Jeffries T.W."/>
            <person name="Grigoriev I.V."/>
            <person name="Grimwood J."/>
            <person name="Laplaza J.M."/>
            <person name="Aerts A."/>
            <person name="Salamov A."/>
            <person name="Schmutz J."/>
            <person name="Lindquist E."/>
            <person name="Dehal P."/>
            <person name="Shapiro H."/>
            <person name="Jin Y.-S."/>
            <person name="Passoth V."/>
            <person name="Richardson P.M."/>
        </authorList>
    </citation>
    <scope>NUCLEOTIDE SEQUENCE [LARGE SCALE GENOMIC DNA]</scope>
    <source>
        <strain>ATCC 58785 / CBS 6054 / NBRC 10063 / NRRL Y-11545</strain>
    </source>
</reference>
<evidence type="ECO:0000250" key="1"/>
<evidence type="ECO:0000250" key="2">
    <source>
        <dbReference type="UniProtKB" id="P43601"/>
    </source>
</evidence>
<evidence type="ECO:0000256" key="3">
    <source>
        <dbReference type="SAM" id="MobiDB-lite"/>
    </source>
</evidence>
<evidence type="ECO:0000305" key="4"/>
<comment type="function">
    <text evidence="1">The PI(3,5)P2 regulatory complex regulates both the synthesis and turnover of phosphatidylinositol 3,5-bisphosphate (PtdIns(3,5)P2). Necessary for proper vacuole morphology. Plays an important role in osmotically-induced vacuole fragmentation. Required for cytoplasm to vacuole transport (Cvt) vesicle formation, pexophagy and starvation-induced autophagy. Involved in correct ATG9 trafficking to the pre-autophagosomal structure. Might also be involved in premeiotic DNA replication (By similarity).</text>
</comment>
<comment type="subunit">
    <text evidence="1">Component of the PI(3,5)P2 regulatory complex.</text>
</comment>
<comment type="subcellular location">
    <subcellularLocation>
        <location evidence="1">Preautophagosomal structure membrane</location>
        <topology evidence="1">Peripheral membrane protein</topology>
    </subcellularLocation>
    <subcellularLocation>
        <location evidence="1">Vacuole membrane</location>
        <topology evidence="1">Peripheral membrane protein</topology>
    </subcellularLocation>
    <subcellularLocation>
        <location evidence="1">Endosome membrane</location>
        <topology evidence="1">Peripheral membrane protein</topology>
    </subcellularLocation>
</comment>
<comment type="domain">
    <text evidence="1">The N-terminus might form a beta-propeller domain involved in specific binding to phosphatidylinositol 3,5-bisphosphate (PIP2), leading to the association of the protein to the membrane.</text>
</comment>
<comment type="domain">
    <text evidence="2">The L/FRRG motif is essential for the cytoplasm to vacuole transport (Cvt) pathway, for the recruitment of ATG8 and ATG16 to the PAS in nutrient-rich medium, and for its recruitment to and dissociation from the PAS under starvation conditions.</text>
</comment>
<comment type="similarity">
    <text evidence="4">Belongs to the WD repeat PROPPIN family.</text>
</comment>
<accession>A3GFE3</accession>
<sequence length="563" mass="61538">MLKAQSAAAGSLHQTLSQYSASIATDGSSSVTGSFKTDDSVNFITFNQDASCIAVGLNNGYKIFNCKPKFGKCYQIRKEESVGIIEMLYCTSLLAIVALGEEPGSSPRKLKIVNTKRQTTICDLIFPSTILQVKLTKSRLIVLLEEQIYIYDITTMKLLHTIETSPNSIGLCALSTTPDNDGNNYLAYPSPPKTITHDSLLASGINTNGGTNSVVNNISSVSNSPNRVGDVIMFNLNTLQPMSVIEAHKSALAAITLSSDGSLLATASDKGTIVRVFSVATGVKLFQFRRGTYSTKIYSLSFSSDNNYVVATSSSETVHIFRLGESEALENKHKKKKASTPKPTQPETIEEEDATLLQERPSQESTQDDDEFADDGDDSDEAVEGDDNDDESLEVISNKQRKLSQGSSNSFASFNSGTDDSSQAAKNEPLIDQNRLSVARLIRRSSQTLGRKAAQRMGDFLPSRFSSILEPTRHFASLKINAIGKDVKSIAVMNNELQEDLVPQAFLMRKDSDSYLSKEMLSLNLLHIYVVTSEGFFYTYGLDPERGGDCILLHQYSLIDESN</sequence>
<feature type="chain" id="PRO_0000318007" description="Autophagy-related protein 18">
    <location>
        <begin position="1"/>
        <end position="563"/>
    </location>
</feature>
<feature type="repeat" description="WD 1">
    <location>
        <begin position="36"/>
        <end position="74"/>
    </location>
</feature>
<feature type="repeat" description="WD 2">
    <location>
        <begin position="247"/>
        <end position="287"/>
    </location>
</feature>
<feature type="repeat" description="WD 3">
    <location>
        <begin position="292"/>
        <end position="331"/>
    </location>
</feature>
<feature type="region of interest" description="Disordered" evidence="3">
    <location>
        <begin position="329"/>
        <end position="430"/>
    </location>
</feature>
<feature type="short sequence motif" description="L/FRRG motif" evidence="2">
    <location>
        <begin position="288"/>
        <end position="292"/>
    </location>
</feature>
<feature type="compositionally biased region" description="Acidic residues" evidence="3">
    <location>
        <begin position="366"/>
        <end position="393"/>
    </location>
</feature>
<feature type="compositionally biased region" description="Low complexity" evidence="3">
    <location>
        <begin position="404"/>
        <end position="417"/>
    </location>
</feature>
<keyword id="KW-0072">Autophagy</keyword>
<keyword id="KW-0967">Endosome</keyword>
<keyword id="KW-0472">Membrane</keyword>
<keyword id="KW-0653">Protein transport</keyword>
<keyword id="KW-1185">Reference proteome</keyword>
<keyword id="KW-0677">Repeat</keyword>
<keyword id="KW-0813">Transport</keyword>
<keyword id="KW-0926">Vacuole</keyword>
<keyword id="KW-0853">WD repeat</keyword>